<keyword id="KW-0012">Acyltransferase</keyword>
<keyword id="KW-0093">Biotin biosynthesis</keyword>
<keyword id="KW-0663">Pyridoxal phosphate</keyword>
<keyword id="KW-0808">Transferase</keyword>
<dbReference type="EC" id="2.3.1.47"/>
<dbReference type="EMBL" id="CP000479">
    <property type="protein sequence ID" value="ABK65140.1"/>
    <property type="molecule type" value="Genomic_DNA"/>
</dbReference>
<dbReference type="RefSeq" id="WP_011725323.1">
    <property type="nucleotide sequence ID" value="NC_008595.1"/>
</dbReference>
<dbReference type="SMR" id="A0QHJ9"/>
<dbReference type="KEGG" id="mav:MAV_3205"/>
<dbReference type="HOGENOM" id="CLU_015846_11_2_11"/>
<dbReference type="UniPathway" id="UPA00078"/>
<dbReference type="Proteomes" id="UP000001574">
    <property type="component" value="Chromosome"/>
</dbReference>
<dbReference type="GO" id="GO:0008710">
    <property type="term" value="F:8-amino-7-oxononanoate synthase activity"/>
    <property type="evidence" value="ECO:0007669"/>
    <property type="project" value="UniProtKB-EC"/>
</dbReference>
<dbReference type="GO" id="GO:0030170">
    <property type="term" value="F:pyridoxal phosphate binding"/>
    <property type="evidence" value="ECO:0007669"/>
    <property type="project" value="InterPro"/>
</dbReference>
<dbReference type="GO" id="GO:0009102">
    <property type="term" value="P:biotin biosynthetic process"/>
    <property type="evidence" value="ECO:0007669"/>
    <property type="project" value="UniProtKB-UniPathway"/>
</dbReference>
<dbReference type="Gene3D" id="3.90.1150.10">
    <property type="entry name" value="Aspartate Aminotransferase, domain 1"/>
    <property type="match status" value="1"/>
</dbReference>
<dbReference type="Gene3D" id="3.40.640.10">
    <property type="entry name" value="Type I PLP-dependent aspartate aminotransferase-like (Major domain)"/>
    <property type="match status" value="1"/>
</dbReference>
<dbReference type="InterPro" id="IPR001917">
    <property type="entry name" value="Aminotrans_II_pyridoxalP_BS"/>
</dbReference>
<dbReference type="InterPro" id="IPR004839">
    <property type="entry name" value="Aminotransferase_I/II_large"/>
</dbReference>
<dbReference type="InterPro" id="IPR050087">
    <property type="entry name" value="AON_synthase_class-II"/>
</dbReference>
<dbReference type="InterPro" id="IPR015424">
    <property type="entry name" value="PyrdxlP-dep_Trfase"/>
</dbReference>
<dbReference type="InterPro" id="IPR015421">
    <property type="entry name" value="PyrdxlP-dep_Trfase_major"/>
</dbReference>
<dbReference type="InterPro" id="IPR015422">
    <property type="entry name" value="PyrdxlP-dep_Trfase_small"/>
</dbReference>
<dbReference type="PANTHER" id="PTHR13693:SF100">
    <property type="entry name" value="8-AMINO-7-OXONONANOATE SYNTHASE"/>
    <property type="match status" value="1"/>
</dbReference>
<dbReference type="PANTHER" id="PTHR13693">
    <property type="entry name" value="CLASS II AMINOTRANSFERASE/8-AMINO-7-OXONONANOATE SYNTHASE"/>
    <property type="match status" value="1"/>
</dbReference>
<dbReference type="Pfam" id="PF00155">
    <property type="entry name" value="Aminotran_1_2"/>
    <property type="match status" value="1"/>
</dbReference>
<dbReference type="SUPFAM" id="SSF53383">
    <property type="entry name" value="PLP-dependent transferases"/>
    <property type="match status" value="1"/>
</dbReference>
<dbReference type="PROSITE" id="PS00599">
    <property type="entry name" value="AA_TRANSFER_CLASS_2"/>
    <property type="match status" value="1"/>
</dbReference>
<reference key="1">
    <citation type="submission" date="2006-10" db="EMBL/GenBank/DDBJ databases">
        <authorList>
            <person name="Fleischmann R.D."/>
            <person name="Dodson R.J."/>
            <person name="Haft D.H."/>
            <person name="Merkel J.S."/>
            <person name="Nelson W.C."/>
            <person name="Fraser C.M."/>
        </authorList>
    </citation>
    <scope>NUCLEOTIDE SEQUENCE [LARGE SCALE GENOMIC DNA]</scope>
    <source>
        <strain>104</strain>
    </source>
</reference>
<gene>
    <name type="ordered locus">MAV_3205</name>
</gene>
<protein>
    <recommendedName>
        <fullName>8-amino-7-oxononanoate synthase</fullName>
        <shortName>AONS</shortName>
        <ecNumber>2.3.1.47</ecNumber>
    </recommendedName>
    <alternativeName>
        <fullName>7-keto-8-amino-pelargonic acid synthase</fullName>
        <shortName>7-KAP synthase</shortName>
        <shortName>KAPA synthase</shortName>
    </alternativeName>
    <alternativeName>
        <fullName>8-amino-7-ketopelargonate synthase</fullName>
    </alternativeName>
    <alternativeName>
        <fullName>Alpha-oxoamine synthase</fullName>
    </alternativeName>
</protein>
<proteinExistence type="inferred from homology"/>
<evidence type="ECO:0000250" key="1"/>
<evidence type="ECO:0000305" key="2"/>
<organism>
    <name type="scientific">Mycobacterium avium (strain 104)</name>
    <dbReference type="NCBI Taxonomy" id="243243"/>
    <lineage>
        <taxon>Bacteria</taxon>
        <taxon>Bacillati</taxon>
        <taxon>Actinomycetota</taxon>
        <taxon>Actinomycetes</taxon>
        <taxon>Mycobacteriales</taxon>
        <taxon>Mycobacteriaceae</taxon>
        <taxon>Mycobacterium</taxon>
        <taxon>Mycobacterium avium complex (MAC)</taxon>
    </lineage>
</organism>
<accession>A0QHJ9</accession>
<feature type="chain" id="PRO_0000381033" description="8-amino-7-oxononanoate synthase">
    <location>
        <begin position="1"/>
        <end position="381"/>
    </location>
</feature>
<feature type="binding site" evidence="1">
    <location>
        <position position="27"/>
    </location>
    <ligand>
        <name>substrate</name>
    </ligand>
</feature>
<feature type="binding site" evidence="1">
    <location>
        <begin position="105"/>
        <end position="106"/>
    </location>
    <ligand>
        <name>pyridoxal 5'-phosphate</name>
        <dbReference type="ChEBI" id="CHEBI:597326"/>
    </ligand>
</feature>
<feature type="binding site" evidence="1">
    <location>
        <position position="130"/>
    </location>
    <ligand>
        <name>substrate</name>
    </ligand>
</feature>
<feature type="binding site" evidence="1">
    <location>
        <position position="176"/>
    </location>
    <ligand>
        <name>pyridoxal 5'-phosphate</name>
        <dbReference type="ChEBI" id="CHEBI:597326"/>
    </ligand>
</feature>
<feature type="binding site" evidence="1">
    <location>
        <begin position="201"/>
        <end position="204"/>
    </location>
    <ligand>
        <name>pyridoxal 5'-phosphate</name>
        <dbReference type="ChEBI" id="CHEBI:597326"/>
    </ligand>
</feature>
<feature type="binding site" evidence="1">
    <location>
        <begin position="232"/>
        <end position="235"/>
    </location>
    <ligand>
        <name>pyridoxal 5'-phosphate</name>
        <dbReference type="ChEBI" id="CHEBI:597326"/>
    </ligand>
</feature>
<feature type="binding site" evidence="1">
    <location>
        <position position="345"/>
    </location>
    <ligand>
        <name>substrate</name>
    </ligand>
</feature>
<feature type="modified residue" description="N6-(pyridoxal phosphate)lysine" evidence="1">
    <location>
        <position position="235"/>
    </location>
</feature>
<name>BIOF_MYCA1</name>
<sequence>MKAPIEVSPLAWLDAVEQQRRAAGLRRSLRPRPPVATELDLASNDYLGLSQHPDVIDGGVAALRLWGAGATGSRLVTGDTELHQQFESELADYVGAASGLLFSSGYAANLGAVVGLSGRGALVVSDAYSHASLVDACRLSRARVVVTPHRDVDAVLAALADRDEERAVVITESVFSTDGALAPLRELHEVCRRHRALLIVDEAHGLGVRGGGRGLVFEAGLAGAPDVVMTTTLSKALGSQGGAVLGPAAVRAHLIDAARTFIFDTGLAPAAVGAARAALGVLRAEPWRVGAVLRHAGVLAEVCRVREVPQSAVVSVILGDPDVAVAAATACLDAGVRVGCFRPPTVPAGTSRLRLTARASLDDAELEVARRVLTDVLAGLG</sequence>
<comment type="function">
    <text evidence="1">Catalyzes the decarboxylative condensation of pimeloyl-[acyl-carrier protein] and L-alanine to produce 8-amino-7-oxononanoate (AON), [acyl-carrier protein], and carbon dioxide.</text>
</comment>
<comment type="catalytic activity">
    <reaction>
        <text>6-carboxyhexanoyl-[ACP] + L-alanine + H(+) = (8S)-8-amino-7-oxononanoate + holo-[ACP] + CO2</text>
        <dbReference type="Rhea" id="RHEA:42288"/>
        <dbReference type="Rhea" id="RHEA-COMP:9685"/>
        <dbReference type="Rhea" id="RHEA-COMP:9955"/>
        <dbReference type="ChEBI" id="CHEBI:15378"/>
        <dbReference type="ChEBI" id="CHEBI:16526"/>
        <dbReference type="ChEBI" id="CHEBI:57972"/>
        <dbReference type="ChEBI" id="CHEBI:64479"/>
        <dbReference type="ChEBI" id="CHEBI:78846"/>
        <dbReference type="ChEBI" id="CHEBI:149468"/>
        <dbReference type="EC" id="2.3.1.47"/>
    </reaction>
</comment>
<comment type="cofactor">
    <cofactor evidence="1">
        <name>pyridoxal 5'-phosphate</name>
        <dbReference type="ChEBI" id="CHEBI:597326"/>
    </cofactor>
</comment>
<comment type="pathway">
    <text>Cofactor biosynthesis; biotin biosynthesis.</text>
</comment>
<comment type="subunit">
    <text evidence="1">Homodimer.</text>
</comment>
<comment type="similarity">
    <text evidence="2">Belongs to the class-II pyridoxal-phosphate-dependent aminotransferase family. BioF subfamily.</text>
</comment>